<evidence type="ECO:0000250" key="1"/>
<evidence type="ECO:0000255" key="2">
    <source>
        <dbReference type="PROSITE-ProRule" id="PRU00147"/>
    </source>
</evidence>
<evidence type="ECO:0000305" key="3"/>
<protein>
    <recommendedName>
        <fullName>Sorting nexin-31</fullName>
    </recommendedName>
</protein>
<accession>Q6DDY6</accession>
<accession>Q3KPM1</accession>
<keyword id="KW-0653">Protein transport</keyword>
<keyword id="KW-1185">Reference proteome</keyword>
<keyword id="KW-0813">Transport</keyword>
<comment type="function">
    <text evidence="1">May be involved in protein trafficking.</text>
</comment>
<comment type="similarity">
    <text evidence="3">Belongs to the sorting nexin family.</text>
</comment>
<reference key="1">
    <citation type="submission" date="2004-07" db="EMBL/GenBank/DDBJ databases">
        <authorList>
            <consortium name="NIH - Xenopus Gene Collection (XGC) project"/>
        </authorList>
    </citation>
    <scope>NUCLEOTIDE SEQUENCE [LARGE SCALE MRNA]</scope>
    <source>
        <tissue>Embryo</tissue>
        <tissue>Ovary</tissue>
    </source>
</reference>
<organism>
    <name type="scientific">Xenopus laevis</name>
    <name type="common">African clawed frog</name>
    <dbReference type="NCBI Taxonomy" id="8355"/>
    <lineage>
        <taxon>Eukaryota</taxon>
        <taxon>Metazoa</taxon>
        <taxon>Chordata</taxon>
        <taxon>Craniata</taxon>
        <taxon>Vertebrata</taxon>
        <taxon>Euteleostomi</taxon>
        <taxon>Amphibia</taxon>
        <taxon>Batrachia</taxon>
        <taxon>Anura</taxon>
        <taxon>Pipoidea</taxon>
        <taxon>Pipidae</taxon>
        <taxon>Xenopodinae</taxon>
        <taxon>Xenopus</taxon>
        <taxon>Xenopus</taxon>
    </lineage>
</organism>
<sequence>MHICIPVTEELQDTLGCRFVLYSVYLEGFLLFKVRYKDLHLWNEQIHRVFGNGLPKFPPKHYLAMTKNMANERRLQLEQYLQQIVTDPVVTSSDIFMDYFRKLQMDTFNMPTVKLILRVYVPDGAAVELDVRTSDSAERVLEAALFRLGVSRELAEYFSLFITHKEAKGPFTVVKRIAAFELPFLTIWNLEDDQFQIEVRKWYMNPSNDVMLMGSTEAIDILYLQAVQEFQMDWTRPTKDQEQKLQHCLKEENKLKFLELMKTVEYYGYLQIASCASDYPECDSEVNVWVGNNEMSCHFHSPGGHTEHLRLNIRDLICWNVSLLQPKKQEVMSPNHQHLEFKFEYQQGSSLKCITIRTEQAFLLSSCLKKMLSEYPVHRSKEELEIQVDRAQATHKFNIRPVQNGVHTKKQTLLKDKAEYCLIDDISDLNL</sequence>
<proteinExistence type="evidence at transcript level"/>
<dbReference type="EMBL" id="BC077365">
    <property type="protein sequence ID" value="AAH77365.1"/>
    <property type="molecule type" value="mRNA"/>
</dbReference>
<dbReference type="EMBL" id="BC106667">
    <property type="protein sequence ID" value="AAI06668.1"/>
    <property type="molecule type" value="mRNA"/>
</dbReference>
<dbReference type="RefSeq" id="NP_001086730.1">
    <property type="nucleotide sequence ID" value="NM_001093261.2"/>
</dbReference>
<dbReference type="SMR" id="Q6DDY6"/>
<dbReference type="DNASU" id="446565"/>
<dbReference type="GeneID" id="446565"/>
<dbReference type="KEGG" id="xla:446565"/>
<dbReference type="AGR" id="Xenbase:XB-GENE-5933804"/>
<dbReference type="CTD" id="446565"/>
<dbReference type="Xenbase" id="XB-GENE-5933804">
    <property type="gene designation" value="snx31.S"/>
</dbReference>
<dbReference type="OrthoDB" id="5772781at2759"/>
<dbReference type="Proteomes" id="UP000186698">
    <property type="component" value="Chromosome 6S"/>
</dbReference>
<dbReference type="Bgee" id="446565">
    <property type="expression patterns" value="Expressed in egg cell and 7 other cell types or tissues"/>
</dbReference>
<dbReference type="GO" id="GO:0005769">
    <property type="term" value="C:early endosome"/>
    <property type="evidence" value="ECO:0000318"/>
    <property type="project" value="GO_Central"/>
</dbReference>
<dbReference type="GO" id="GO:0035091">
    <property type="term" value="F:phosphatidylinositol binding"/>
    <property type="evidence" value="ECO:0000318"/>
    <property type="project" value="GO_Central"/>
</dbReference>
<dbReference type="GO" id="GO:0032456">
    <property type="term" value="P:endocytic recycling"/>
    <property type="evidence" value="ECO:0000318"/>
    <property type="project" value="GO_Central"/>
</dbReference>
<dbReference type="GO" id="GO:0006886">
    <property type="term" value="P:intracellular protein transport"/>
    <property type="evidence" value="ECO:0000318"/>
    <property type="project" value="GO_Central"/>
</dbReference>
<dbReference type="CDD" id="cd13336">
    <property type="entry name" value="FERM-like_C_SNX31"/>
    <property type="match status" value="1"/>
</dbReference>
<dbReference type="CDD" id="cd16122">
    <property type="entry name" value="FERM_F1_SNX31"/>
    <property type="match status" value="1"/>
</dbReference>
<dbReference type="CDD" id="cd06885">
    <property type="entry name" value="PX_SNX17_31"/>
    <property type="match status" value="1"/>
</dbReference>
<dbReference type="FunFam" id="1.20.80.60:FF:000001">
    <property type="entry name" value="Sorting nexin-17 isoform1"/>
    <property type="match status" value="1"/>
</dbReference>
<dbReference type="FunFam" id="3.30.1520.10:FF:000008">
    <property type="entry name" value="Sorting nexin-17 isoform1"/>
    <property type="match status" value="1"/>
</dbReference>
<dbReference type="Gene3D" id="1.20.80.60">
    <property type="match status" value="1"/>
</dbReference>
<dbReference type="Gene3D" id="3.10.20.90">
    <property type="entry name" value="Phosphatidylinositol 3-kinase Catalytic Subunit, Chain A, domain 1"/>
    <property type="match status" value="1"/>
</dbReference>
<dbReference type="Gene3D" id="3.30.1520.10">
    <property type="entry name" value="Phox-like domain"/>
    <property type="match status" value="1"/>
</dbReference>
<dbReference type="Gene3D" id="2.30.29.30">
    <property type="entry name" value="Pleckstrin-homology domain (PH domain)/Phosphotyrosine-binding domain (PTB)"/>
    <property type="match status" value="1"/>
</dbReference>
<dbReference type="InterPro" id="IPR011993">
    <property type="entry name" value="PH-like_dom_sf"/>
</dbReference>
<dbReference type="InterPro" id="IPR001683">
    <property type="entry name" value="PX_dom"/>
</dbReference>
<dbReference type="InterPro" id="IPR036871">
    <property type="entry name" value="PX_dom_sf"/>
</dbReference>
<dbReference type="InterPro" id="IPR048763">
    <property type="entry name" value="SNX17-31_FERM_F1"/>
</dbReference>
<dbReference type="InterPro" id="IPR040842">
    <property type="entry name" value="SNX17/31_FERM"/>
</dbReference>
<dbReference type="PANTHER" id="PTHR12431">
    <property type="entry name" value="SORTING NEXIN 17 AND 27"/>
    <property type="match status" value="1"/>
</dbReference>
<dbReference type="PANTHER" id="PTHR12431:SF15">
    <property type="entry name" value="SORTING NEXIN-31"/>
    <property type="match status" value="1"/>
</dbReference>
<dbReference type="Pfam" id="PF00787">
    <property type="entry name" value="PX"/>
    <property type="match status" value="1"/>
</dbReference>
<dbReference type="Pfam" id="PF21273">
    <property type="entry name" value="SNX17-27-31_F1_FERM"/>
    <property type="match status" value="1"/>
</dbReference>
<dbReference type="Pfam" id="PF18116">
    <property type="entry name" value="SNX17_FERM_C"/>
    <property type="match status" value="1"/>
</dbReference>
<dbReference type="SMART" id="SM00312">
    <property type="entry name" value="PX"/>
    <property type="match status" value="1"/>
</dbReference>
<dbReference type="SUPFAM" id="SSF64268">
    <property type="entry name" value="PX domain"/>
    <property type="match status" value="1"/>
</dbReference>
<dbReference type="PROSITE" id="PS50195">
    <property type="entry name" value="PX"/>
    <property type="match status" value="1"/>
</dbReference>
<feature type="chain" id="PRO_0000331605" description="Sorting nexin-31">
    <location>
        <begin position="1"/>
        <end position="431"/>
    </location>
</feature>
<feature type="domain" description="PX" evidence="2">
    <location>
        <begin position="1"/>
        <end position="107"/>
    </location>
</feature>
<feature type="sequence conflict" description="In Ref. 1; AAI06668." evidence="3" ref="1">
    <original>H</original>
    <variation>Y</variation>
    <location>
        <position position="395"/>
    </location>
</feature>
<name>SNX31_XENLA</name>
<gene>
    <name type="primary">snx31</name>
</gene>